<reference key="1">
    <citation type="submission" date="2007-12" db="EMBL/GenBank/DDBJ databases">
        <title>Brucella suis ATCC 23445 whole genome shotgun sequencing project.</title>
        <authorList>
            <person name="Setubal J.C."/>
            <person name="Bowns C."/>
            <person name="Boyle S."/>
            <person name="Crasta O.R."/>
            <person name="Czar M.J."/>
            <person name="Dharmanolla C."/>
            <person name="Gillespie J.J."/>
            <person name="Kenyon R.W."/>
            <person name="Lu J."/>
            <person name="Mane S."/>
            <person name="Mohapatra S."/>
            <person name="Nagrani S."/>
            <person name="Purkayastha A."/>
            <person name="Rajasimha H.K."/>
            <person name="Shallom J.M."/>
            <person name="Shallom S."/>
            <person name="Shukla M."/>
            <person name="Snyder E.E."/>
            <person name="Sobral B.W."/>
            <person name="Wattam A.R."/>
            <person name="Will R."/>
            <person name="Williams K."/>
            <person name="Yoo H."/>
            <person name="Bruce D."/>
            <person name="Detter C."/>
            <person name="Munk C."/>
            <person name="Brettin T.S."/>
        </authorList>
    </citation>
    <scope>NUCLEOTIDE SEQUENCE [LARGE SCALE GENOMIC DNA]</scope>
    <source>
        <strain>ATCC 23445 / NCTC 10510</strain>
    </source>
</reference>
<sequence length="157" mass="17529">MEKFPMTPRGFEKLKEELRWRQQSERPRIIEAIAEARAHGDLSENAEYHAAKEAQSLNEGRINELEDLVARAEVIDVSKLTGDRIKFGATVTMIDEDTEEEKIYQIVGDQEADVKEGRISISSPIARALIGKGEGDTIEVNAPGGSRSYEIIALKFV</sequence>
<feature type="chain" id="PRO_1000075868" description="Transcription elongation factor GreA">
    <location>
        <begin position="1"/>
        <end position="157"/>
    </location>
</feature>
<gene>
    <name evidence="1" type="primary">greA</name>
    <name type="ordered locus">BSUIS_A1560</name>
</gene>
<protein>
    <recommendedName>
        <fullName evidence="1">Transcription elongation factor GreA</fullName>
    </recommendedName>
    <alternativeName>
        <fullName evidence="1">Transcript cleavage factor GreA</fullName>
    </alternativeName>
</protein>
<proteinExistence type="inferred from homology"/>
<comment type="function">
    <text evidence="1">Necessary for efficient RNA polymerase transcription elongation past template-encoded arresting sites. The arresting sites in DNA have the property of trapping a certain fraction of elongating RNA polymerases that pass through, resulting in locked ternary complexes. Cleavage of the nascent transcript by cleavage factors such as GreA or GreB allows the resumption of elongation from the new 3'terminus. GreA releases sequences of 2 to 3 nucleotides.</text>
</comment>
<comment type="similarity">
    <text evidence="1">Belongs to the GreA/GreB family.</text>
</comment>
<accession>B0CHU1</accession>
<organism>
    <name type="scientific">Brucella suis (strain ATCC 23445 / NCTC 10510)</name>
    <dbReference type="NCBI Taxonomy" id="470137"/>
    <lineage>
        <taxon>Bacteria</taxon>
        <taxon>Pseudomonadati</taxon>
        <taxon>Pseudomonadota</taxon>
        <taxon>Alphaproteobacteria</taxon>
        <taxon>Hyphomicrobiales</taxon>
        <taxon>Brucellaceae</taxon>
        <taxon>Brucella/Ochrobactrum group</taxon>
        <taxon>Brucella</taxon>
    </lineage>
</organism>
<dbReference type="EMBL" id="CP000911">
    <property type="protein sequence ID" value="ABY38592.1"/>
    <property type="molecule type" value="Genomic_DNA"/>
</dbReference>
<dbReference type="RefSeq" id="WP_002964610.1">
    <property type="nucleotide sequence ID" value="NC_010169.1"/>
</dbReference>
<dbReference type="SMR" id="B0CHU1"/>
<dbReference type="GeneID" id="93016210"/>
<dbReference type="KEGG" id="bmt:BSUIS_A1560"/>
<dbReference type="HOGENOM" id="CLU_101379_2_0_5"/>
<dbReference type="Proteomes" id="UP000008545">
    <property type="component" value="Chromosome I"/>
</dbReference>
<dbReference type="GO" id="GO:0003677">
    <property type="term" value="F:DNA binding"/>
    <property type="evidence" value="ECO:0007669"/>
    <property type="project" value="UniProtKB-UniRule"/>
</dbReference>
<dbReference type="GO" id="GO:0070063">
    <property type="term" value="F:RNA polymerase binding"/>
    <property type="evidence" value="ECO:0007669"/>
    <property type="project" value="InterPro"/>
</dbReference>
<dbReference type="GO" id="GO:0006354">
    <property type="term" value="P:DNA-templated transcription elongation"/>
    <property type="evidence" value="ECO:0007669"/>
    <property type="project" value="TreeGrafter"/>
</dbReference>
<dbReference type="GO" id="GO:0032784">
    <property type="term" value="P:regulation of DNA-templated transcription elongation"/>
    <property type="evidence" value="ECO:0007669"/>
    <property type="project" value="UniProtKB-UniRule"/>
</dbReference>
<dbReference type="FunFam" id="1.10.287.180:FF:000001">
    <property type="entry name" value="Transcription elongation factor GreA"/>
    <property type="match status" value="1"/>
</dbReference>
<dbReference type="FunFam" id="3.10.50.30:FF:000001">
    <property type="entry name" value="Transcription elongation factor GreA"/>
    <property type="match status" value="1"/>
</dbReference>
<dbReference type="Gene3D" id="3.10.50.30">
    <property type="entry name" value="Transcription elongation factor, GreA/GreB, C-terminal domain"/>
    <property type="match status" value="1"/>
</dbReference>
<dbReference type="Gene3D" id="1.10.287.180">
    <property type="entry name" value="Transcription elongation factor, GreA/GreB, N-terminal domain"/>
    <property type="match status" value="1"/>
</dbReference>
<dbReference type="HAMAP" id="MF_00105">
    <property type="entry name" value="GreA_GreB"/>
    <property type="match status" value="1"/>
</dbReference>
<dbReference type="InterPro" id="IPR036953">
    <property type="entry name" value="GreA/GreB_C_sf"/>
</dbReference>
<dbReference type="InterPro" id="IPR018151">
    <property type="entry name" value="TF_GreA/GreB_CS"/>
</dbReference>
<dbReference type="InterPro" id="IPR006359">
    <property type="entry name" value="Tscrpt_elong_fac_GreA"/>
</dbReference>
<dbReference type="InterPro" id="IPR028624">
    <property type="entry name" value="Tscrpt_elong_fac_GreA/B"/>
</dbReference>
<dbReference type="InterPro" id="IPR001437">
    <property type="entry name" value="Tscrpt_elong_fac_GreA/B_C"/>
</dbReference>
<dbReference type="InterPro" id="IPR023459">
    <property type="entry name" value="Tscrpt_elong_fac_GreA/B_fam"/>
</dbReference>
<dbReference type="InterPro" id="IPR022691">
    <property type="entry name" value="Tscrpt_elong_fac_GreA/B_N"/>
</dbReference>
<dbReference type="InterPro" id="IPR036805">
    <property type="entry name" value="Tscrpt_elong_fac_GreA/B_N_sf"/>
</dbReference>
<dbReference type="NCBIfam" id="TIGR01462">
    <property type="entry name" value="greA"/>
    <property type="match status" value="1"/>
</dbReference>
<dbReference type="NCBIfam" id="NF001261">
    <property type="entry name" value="PRK00226.1-2"/>
    <property type="match status" value="1"/>
</dbReference>
<dbReference type="NCBIfam" id="NF001263">
    <property type="entry name" value="PRK00226.1-4"/>
    <property type="match status" value="1"/>
</dbReference>
<dbReference type="NCBIfam" id="NF001264">
    <property type="entry name" value="PRK00226.1-5"/>
    <property type="match status" value="1"/>
</dbReference>
<dbReference type="PANTHER" id="PTHR30437">
    <property type="entry name" value="TRANSCRIPTION ELONGATION FACTOR GREA"/>
    <property type="match status" value="1"/>
</dbReference>
<dbReference type="PANTHER" id="PTHR30437:SF4">
    <property type="entry name" value="TRANSCRIPTION ELONGATION FACTOR GREA"/>
    <property type="match status" value="1"/>
</dbReference>
<dbReference type="Pfam" id="PF01272">
    <property type="entry name" value="GreA_GreB"/>
    <property type="match status" value="1"/>
</dbReference>
<dbReference type="Pfam" id="PF03449">
    <property type="entry name" value="GreA_GreB_N"/>
    <property type="match status" value="1"/>
</dbReference>
<dbReference type="PIRSF" id="PIRSF006092">
    <property type="entry name" value="GreA_GreB"/>
    <property type="match status" value="1"/>
</dbReference>
<dbReference type="SUPFAM" id="SSF54534">
    <property type="entry name" value="FKBP-like"/>
    <property type="match status" value="1"/>
</dbReference>
<dbReference type="SUPFAM" id="SSF46557">
    <property type="entry name" value="GreA transcript cleavage protein, N-terminal domain"/>
    <property type="match status" value="1"/>
</dbReference>
<dbReference type="PROSITE" id="PS00829">
    <property type="entry name" value="GREAB_1"/>
    <property type="match status" value="1"/>
</dbReference>
<dbReference type="PROSITE" id="PS00830">
    <property type="entry name" value="GREAB_2"/>
    <property type="match status" value="1"/>
</dbReference>
<name>GREA_BRUSI</name>
<keyword id="KW-0238">DNA-binding</keyword>
<keyword id="KW-0804">Transcription</keyword>
<keyword id="KW-0805">Transcription regulation</keyword>
<evidence type="ECO:0000255" key="1">
    <source>
        <dbReference type="HAMAP-Rule" id="MF_00105"/>
    </source>
</evidence>